<reference key="1">
    <citation type="journal article" date="2004" name="Nat. Biotechnol.">
        <title>Complete genome sequence of the metabolically versatile photosynthetic bacterium Rhodopseudomonas palustris.</title>
        <authorList>
            <person name="Larimer F.W."/>
            <person name="Chain P."/>
            <person name="Hauser L."/>
            <person name="Lamerdin J.E."/>
            <person name="Malfatti S."/>
            <person name="Do L."/>
            <person name="Land M.L."/>
            <person name="Pelletier D.A."/>
            <person name="Beatty J.T."/>
            <person name="Lang A.S."/>
            <person name="Tabita F.R."/>
            <person name="Gibson J.L."/>
            <person name="Hanson T.E."/>
            <person name="Bobst C."/>
            <person name="Torres y Torres J.L."/>
            <person name="Peres C."/>
            <person name="Harrison F.H."/>
            <person name="Gibson J."/>
            <person name="Harwood C.S."/>
        </authorList>
    </citation>
    <scope>NUCLEOTIDE SEQUENCE [LARGE SCALE GENOMIC DNA]</scope>
    <source>
        <strain>ATCC BAA-98 / CGA009</strain>
    </source>
</reference>
<dbReference type="EC" id="7.3.2.1" evidence="1"/>
<dbReference type="EMBL" id="BX572608">
    <property type="protein sequence ID" value="CAE30217.1"/>
    <property type="molecule type" value="Genomic_DNA"/>
</dbReference>
<dbReference type="RefSeq" id="WP_011160309.1">
    <property type="nucleotide sequence ID" value="NZ_CP116810.1"/>
</dbReference>
<dbReference type="SMR" id="Q6N0I5"/>
<dbReference type="STRING" id="258594.RPA4777"/>
<dbReference type="GeneID" id="66895938"/>
<dbReference type="eggNOG" id="COG1117">
    <property type="taxonomic scope" value="Bacteria"/>
</dbReference>
<dbReference type="HOGENOM" id="CLU_000604_1_22_5"/>
<dbReference type="PhylomeDB" id="Q6N0I5"/>
<dbReference type="GO" id="GO:0005886">
    <property type="term" value="C:plasma membrane"/>
    <property type="evidence" value="ECO:0007669"/>
    <property type="project" value="UniProtKB-SubCell"/>
</dbReference>
<dbReference type="GO" id="GO:0005524">
    <property type="term" value="F:ATP binding"/>
    <property type="evidence" value="ECO:0007669"/>
    <property type="project" value="UniProtKB-KW"/>
</dbReference>
<dbReference type="GO" id="GO:0016887">
    <property type="term" value="F:ATP hydrolysis activity"/>
    <property type="evidence" value="ECO:0007669"/>
    <property type="project" value="InterPro"/>
</dbReference>
<dbReference type="GO" id="GO:0015415">
    <property type="term" value="F:ATPase-coupled phosphate ion transmembrane transporter activity"/>
    <property type="evidence" value="ECO:0007669"/>
    <property type="project" value="UniProtKB-EC"/>
</dbReference>
<dbReference type="GO" id="GO:0035435">
    <property type="term" value="P:phosphate ion transmembrane transport"/>
    <property type="evidence" value="ECO:0007669"/>
    <property type="project" value="InterPro"/>
</dbReference>
<dbReference type="CDD" id="cd03260">
    <property type="entry name" value="ABC_PstB_phosphate_transporter"/>
    <property type="match status" value="1"/>
</dbReference>
<dbReference type="FunFam" id="3.40.50.300:FF:000132">
    <property type="entry name" value="Phosphate import ATP-binding protein PstB"/>
    <property type="match status" value="1"/>
</dbReference>
<dbReference type="Gene3D" id="3.40.50.300">
    <property type="entry name" value="P-loop containing nucleotide triphosphate hydrolases"/>
    <property type="match status" value="1"/>
</dbReference>
<dbReference type="InterPro" id="IPR003593">
    <property type="entry name" value="AAA+_ATPase"/>
</dbReference>
<dbReference type="InterPro" id="IPR003439">
    <property type="entry name" value="ABC_transporter-like_ATP-bd"/>
</dbReference>
<dbReference type="InterPro" id="IPR017871">
    <property type="entry name" value="ABC_transporter-like_CS"/>
</dbReference>
<dbReference type="InterPro" id="IPR027417">
    <property type="entry name" value="P-loop_NTPase"/>
</dbReference>
<dbReference type="InterPro" id="IPR005670">
    <property type="entry name" value="PstB-like"/>
</dbReference>
<dbReference type="NCBIfam" id="TIGR00972">
    <property type="entry name" value="3a0107s01c2"/>
    <property type="match status" value="1"/>
</dbReference>
<dbReference type="PANTHER" id="PTHR43423">
    <property type="entry name" value="ABC TRANSPORTER I FAMILY MEMBER 17"/>
    <property type="match status" value="1"/>
</dbReference>
<dbReference type="PANTHER" id="PTHR43423:SF3">
    <property type="entry name" value="PHOSPHATE IMPORT ATP-BINDING PROTEIN PSTB"/>
    <property type="match status" value="1"/>
</dbReference>
<dbReference type="Pfam" id="PF00005">
    <property type="entry name" value="ABC_tran"/>
    <property type="match status" value="1"/>
</dbReference>
<dbReference type="SMART" id="SM00382">
    <property type="entry name" value="AAA"/>
    <property type="match status" value="1"/>
</dbReference>
<dbReference type="SUPFAM" id="SSF52540">
    <property type="entry name" value="P-loop containing nucleoside triphosphate hydrolases"/>
    <property type="match status" value="1"/>
</dbReference>
<dbReference type="PROSITE" id="PS00211">
    <property type="entry name" value="ABC_TRANSPORTER_1"/>
    <property type="match status" value="1"/>
</dbReference>
<dbReference type="PROSITE" id="PS50893">
    <property type="entry name" value="ABC_TRANSPORTER_2"/>
    <property type="match status" value="1"/>
</dbReference>
<dbReference type="PROSITE" id="PS51238">
    <property type="entry name" value="PSTB"/>
    <property type="match status" value="1"/>
</dbReference>
<name>PSTB_RHOPA</name>
<accession>Q6N0I5</accession>
<organism>
    <name type="scientific">Rhodopseudomonas palustris (strain ATCC BAA-98 / CGA009)</name>
    <dbReference type="NCBI Taxonomy" id="258594"/>
    <lineage>
        <taxon>Bacteria</taxon>
        <taxon>Pseudomonadati</taxon>
        <taxon>Pseudomonadota</taxon>
        <taxon>Alphaproteobacteria</taxon>
        <taxon>Hyphomicrobiales</taxon>
        <taxon>Nitrobacteraceae</taxon>
        <taxon>Rhodopseudomonas</taxon>
    </lineage>
</organism>
<comment type="function">
    <text evidence="1">Part of the ABC transporter complex PstSACB involved in phosphate import. Responsible for energy coupling to the transport system.</text>
</comment>
<comment type="catalytic activity">
    <reaction evidence="1">
        <text>phosphate(out) + ATP + H2O = ADP + 2 phosphate(in) + H(+)</text>
        <dbReference type="Rhea" id="RHEA:24440"/>
        <dbReference type="ChEBI" id="CHEBI:15377"/>
        <dbReference type="ChEBI" id="CHEBI:15378"/>
        <dbReference type="ChEBI" id="CHEBI:30616"/>
        <dbReference type="ChEBI" id="CHEBI:43474"/>
        <dbReference type="ChEBI" id="CHEBI:456216"/>
        <dbReference type="EC" id="7.3.2.1"/>
    </reaction>
</comment>
<comment type="subunit">
    <text evidence="1">The complex is composed of two ATP-binding proteins (PstB), two transmembrane proteins (PstC and PstA) and a solute-binding protein (PstS).</text>
</comment>
<comment type="subcellular location">
    <subcellularLocation>
        <location evidence="1">Cell inner membrane</location>
        <topology evidence="1">Peripheral membrane protein</topology>
    </subcellularLocation>
</comment>
<comment type="similarity">
    <text evidence="1">Belongs to the ABC transporter superfamily. Phosphate importer (TC 3.A.1.7) family.</text>
</comment>
<evidence type="ECO:0000255" key="1">
    <source>
        <dbReference type="HAMAP-Rule" id="MF_01702"/>
    </source>
</evidence>
<sequence length="273" mass="30242">MTEISIATSVPSAMPPIGAQPDGPAKVTVRDLNFYYGQNHALKHINLALATNRVTAFIGPSGCGKSTLLRIFNRMYDLYPGQRAEGQVLLDNANILDPKLDLNLLRARVGMVFQKPTPFPMTIYENIAFGVRLYEKISKSEMDGRVEKALRGAALWNEVKDKLNASGLSLSGGQQQRLCIARTIAVRPEVILFDEPCSALDPISTAKIEELIDELKEQYTIAIVTHNMQQAARVSESTAFMYLGELIEFGPTNKIFTSPSDRRTQDYITGRFG</sequence>
<keyword id="KW-0067">ATP-binding</keyword>
<keyword id="KW-0997">Cell inner membrane</keyword>
<keyword id="KW-1003">Cell membrane</keyword>
<keyword id="KW-0472">Membrane</keyword>
<keyword id="KW-0547">Nucleotide-binding</keyword>
<keyword id="KW-0592">Phosphate transport</keyword>
<keyword id="KW-1278">Translocase</keyword>
<keyword id="KW-0813">Transport</keyword>
<proteinExistence type="inferred from homology"/>
<gene>
    <name evidence="1" type="primary">pstB</name>
    <name type="ordered locus">RPA4777</name>
</gene>
<feature type="chain" id="PRO_0000092871" description="Phosphate import ATP-binding protein PstB">
    <location>
        <begin position="1"/>
        <end position="273"/>
    </location>
</feature>
<feature type="domain" description="ABC transporter" evidence="1">
    <location>
        <begin position="27"/>
        <end position="268"/>
    </location>
</feature>
<feature type="binding site" evidence="1">
    <location>
        <begin position="59"/>
        <end position="66"/>
    </location>
    <ligand>
        <name>ATP</name>
        <dbReference type="ChEBI" id="CHEBI:30616"/>
    </ligand>
</feature>
<protein>
    <recommendedName>
        <fullName evidence="1">Phosphate import ATP-binding protein PstB</fullName>
        <ecNumber evidence="1">7.3.2.1</ecNumber>
    </recommendedName>
    <alternativeName>
        <fullName evidence="1">ABC phosphate transporter</fullName>
    </alternativeName>
    <alternativeName>
        <fullName evidence="1">Phosphate-transporting ATPase</fullName>
    </alternativeName>
</protein>